<organism>
    <name type="scientific">Talaromyces marneffei (strain ATCC 18224 / CBS 334.59 / QM 7333)</name>
    <name type="common">Penicillium marneffei</name>
    <dbReference type="NCBI Taxonomy" id="441960"/>
    <lineage>
        <taxon>Eukaryota</taxon>
        <taxon>Fungi</taxon>
        <taxon>Dikarya</taxon>
        <taxon>Ascomycota</taxon>
        <taxon>Pezizomycotina</taxon>
        <taxon>Eurotiomycetes</taxon>
        <taxon>Eurotiomycetidae</taxon>
        <taxon>Eurotiales</taxon>
        <taxon>Trichocomaceae</taxon>
        <taxon>Talaromyces</taxon>
        <taxon>Talaromyces sect. Talaromyces</taxon>
    </lineage>
</organism>
<keyword id="KW-0031">Aminopeptidase</keyword>
<keyword id="KW-0325">Glycoprotein</keyword>
<keyword id="KW-0378">Hydrolase</keyword>
<keyword id="KW-0472">Membrane</keyword>
<keyword id="KW-0645">Protease</keyword>
<keyword id="KW-1185">Reference proteome</keyword>
<keyword id="KW-0720">Serine protease</keyword>
<keyword id="KW-0735">Signal-anchor</keyword>
<keyword id="KW-0812">Transmembrane</keyword>
<keyword id="KW-1133">Transmembrane helix</keyword>
<keyword id="KW-0926">Vacuole</keyword>
<comment type="function">
    <text evidence="1">Type IV dipeptidyl-peptidase which removes N-terminal dipeptides sequentially from polypeptides having unsubstituted N-termini provided that the penultimate residue is proline.</text>
</comment>
<comment type="catalytic activity">
    <reaction>
        <text>Release of an N-terminal dipeptide, Xaa-Yaa-|-Zaa-, from a polypeptide, preferentially when Yaa is Pro, provided Zaa is neither Pro nor hydroxyproline.</text>
        <dbReference type="EC" id="3.4.14.5"/>
    </reaction>
</comment>
<comment type="subcellular location">
    <subcellularLocation>
        <location evidence="1">Vacuole membrane</location>
        <topology evidence="1">Single-pass type II membrane protein</topology>
    </subcellularLocation>
    <text evidence="1">Lysosome-like vacuoles.</text>
</comment>
<comment type="similarity">
    <text evidence="4">Belongs to the peptidase S9B family.</text>
</comment>
<gene>
    <name type="primary">dapB</name>
    <name type="ORF">PMAA_013400</name>
</gene>
<reference key="1">
    <citation type="journal article" date="2015" name="Genome Announc.">
        <title>Genome sequence of the AIDS-associated pathogen Penicillium marneffei (ATCC18224) and its near taxonomic relative Talaromyces stipitatus (ATCC10500).</title>
        <authorList>
            <person name="Nierman W.C."/>
            <person name="Fedorova-Abrams N.D."/>
            <person name="Andrianopoulos A."/>
        </authorList>
    </citation>
    <scope>NUCLEOTIDE SEQUENCE [LARGE SCALE GENOMIC DNA]</scope>
    <source>
        <strain>ATCC 18224 / CBS 334.59 / QM 7333</strain>
    </source>
</reference>
<evidence type="ECO:0000250" key="1"/>
<evidence type="ECO:0000255" key="2"/>
<evidence type="ECO:0000256" key="3">
    <source>
        <dbReference type="SAM" id="MobiDB-lite"/>
    </source>
</evidence>
<evidence type="ECO:0000305" key="4"/>
<proteinExistence type="inferred from homology"/>
<name>DAPB_TALMQ</name>
<accession>B6QVW4</accession>
<dbReference type="EC" id="3.4.14.5"/>
<dbReference type="EMBL" id="DS995906">
    <property type="protein sequence ID" value="EEA19077.1"/>
    <property type="molecule type" value="Genomic_DNA"/>
</dbReference>
<dbReference type="RefSeq" id="XP_002153462.1">
    <property type="nucleotide sequence ID" value="XM_002153426.1"/>
</dbReference>
<dbReference type="SMR" id="B6QVW4"/>
<dbReference type="STRING" id="441960.B6QVW4"/>
<dbReference type="ESTHER" id="penmq-dapb">
    <property type="family name" value="DPP4N_Peptidase_S9"/>
</dbReference>
<dbReference type="MEROPS" id="S09.006"/>
<dbReference type="GlyCosmos" id="B6QVW4">
    <property type="glycosylation" value="8 sites, No reported glycans"/>
</dbReference>
<dbReference type="VEuPathDB" id="FungiDB:PMAA_013400"/>
<dbReference type="HOGENOM" id="CLU_006105_0_1_1"/>
<dbReference type="OrthoDB" id="2570at28568"/>
<dbReference type="PhylomeDB" id="B6QVW4"/>
<dbReference type="Proteomes" id="UP000001294">
    <property type="component" value="Unassembled WGS sequence"/>
</dbReference>
<dbReference type="GO" id="GO:0005886">
    <property type="term" value="C:plasma membrane"/>
    <property type="evidence" value="ECO:0007669"/>
    <property type="project" value="TreeGrafter"/>
</dbReference>
<dbReference type="GO" id="GO:0005774">
    <property type="term" value="C:vacuolar membrane"/>
    <property type="evidence" value="ECO:0007669"/>
    <property type="project" value="UniProtKB-SubCell"/>
</dbReference>
<dbReference type="GO" id="GO:0004177">
    <property type="term" value="F:aminopeptidase activity"/>
    <property type="evidence" value="ECO:0007669"/>
    <property type="project" value="UniProtKB-KW"/>
</dbReference>
<dbReference type="GO" id="GO:0008239">
    <property type="term" value="F:dipeptidyl-peptidase activity"/>
    <property type="evidence" value="ECO:0007669"/>
    <property type="project" value="UniProtKB-EC"/>
</dbReference>
<dbReference type="GO" id="GO:0008236">
    <property type="term" value="F:serine-type peptidase activity"/>
    <property type="evidence" value="ECO:0007669"/>
    <property type="project" value="UniProtKB-KW"/>
</dbReference>
<dbReference type="GO" id="GO:0006508">
    <property type="term" value="P:proteolysis"/>
    <property type="evidence" value="ECO:0007669"/>
    <property type="project" value="UniProtKB-KW"/>
</dbReference>
<dbReference type="FunFam" id="3.40.50.1820:FF:000003">
    <property type="entry name" value="Dipeptidyl peptidase 4"/>
    <property type="match status" value="1"/>
</dbReference>
<dbReference type="Gene3D" id="3.40.50.1820">
    <property type="entry name" value="alpha/beta hydrolase"/>
    <property type="match status" value="1"/>
</dbReference>
<dbReference type="Gene3D" id="2.140.10.30">
    <property type="entry name" value="Dipeptidylpeptidase IV, N-terminal domain"/>
    <property type="match status" value="1"/>
</dbReference>
<dbReference type="InterPro" id="IPR029058">
    <property type="entry name" value="AB_hydrolase_fold"/>
</dbReference>
<dbReference type="InterPro" id="IPR001375">
    <property type="entry name" value="Peptidase_S9_cat"/>
</dbReference>
<dbReference type="InterPro" id="IPR002469">
    <property type="entry name" value="Peptidase_S9B_N"/>
</dbReference>
<dbReference type="InterPro" id="IPR050278">
    <property type="entry name" value="Serine_Prot_S9B/DPPIV"/>
</dbReference>
<dbReference type="PANTHER" id="PTHR11731:SF200">
    <property type="entry name" value="DIPEPTIDYL PEPTIDASE 10, ISOFORM B"/>
    <property type="match status" value="1"/>
</dbReference>
<dbReference type="PANTHER" id="PTHR11731">
    <property type="entry name" value="PROTEASE FAMILY S9B,C DIPEPTIDYL-PEPTIDASE IV-RELATED"/>
    <property type="match status" value="1"/>
</dbReference>
<dbReference type="Pfam" id="PF00930">
    <property type="entry name" value="DPPIV_N"/>
    <property type="match status" value="1"/>
</dbReference>
<dbReference type="Pfam" id="PF00326">
    <property type="entry name" value="Peptidase_S9"/>
    <property type="match status" value="1"/>
</dbReference>
<dbReference type="SUPFAM" id="SSF53474">
    <property type="entry name" value="alpha/beta-Hydrolases"/>
    <property type="match status" value="1"/>
</dbReference>
<dbReference type="SUPFAM" id="SSF82171">
    <property type="entry name" value="DPP6 N-terminal domain-like"/>
    <property type="match status" value="1"/>
</dbReference>
<protein>
    <recommendedName>
        <fullName>Probable dipeptidyl-aminopeptidase B</fullName>
        <shortName>DPAP B</shortName>
        <ecNumber>3.4.14.5</ecNumber>
    </recommendedName>
</protein>
<sequence length="899" mass="100866">MARKDKDNGPEFVPLTNRSHRSSASFSSTDSLSSDGSLFGDDDVNALHSQKITRTQLPEENPYRDDDVELERGDNIFSRPTENSKRNRGSRLIWVVGLLCLGGWILAFVLFWGRRNSELSSSIAAVHGADSATGSTSYGKPLTLDGVLNGSWGRRRHSISWVAGPNGQDGLLLERDEDEKKAYLRVESIHSRQNQTDAREGWVLMESGAFAVNGKSLQPSATWPSPDFKSVLVAANAVSNWRHSFTATYWLFDVDTQTAQPLDPDEPKGRIQLASWSPQSDAVVFTRDNNLYLRKLDSDKVSQLTKDGGKDVFNGVPDWVYEEEVFGTDSTTWWSKDGKYVAFLRTNESMVPEFPIEYYMSRPSGKKPPAGLDKYPDVRKIKYPKAGSPNPVVTLQFYDIENAEVFSVNVSGGFADDDRLITEVVWASSGKVLVKEFNRESDVIRTVLIDVPSRTGELVRVDNFAQDDGGWAEVTQSTTFIPADPANGRPDDGYIDIIVHDGYDHWGYFTPVNNSVPVLLTSGPWEVVDTEPAVDLANNIVYFVASKESPTQRHVYSVKLDGSDLQPLTDVTKAGYYDASFSIGGGYVLLSYDGPRVPWQKVINTPSNQNPFEEIIEQNEQLSKMIEKYALPAEIYQNITIDNVTLQVVERRPPHFNPVKKYPVLFWLYGGPGSQSVDRRFSVDFQSYVASTLGYIVVTVDGRGTGHIGRAARTIVRGNLGYWEARDQIETAKAWAKKPYVDKDHIAIWGWSYGGFMTLKTLEQDAGQTFQYGMAVSPVTDWRFYDSIYTERYMHTPEHNPTGYEHSAISNMTALQQNVRFLVMHGTADDNVHFQNTLSLIDKLDMAGVENYDVHVYPDSDHSIYFHNAHKMVYDRLSSWLVTAFTDGWQQGNSVLPVT</sequence>
<feature type="chain" id="PRO_0000412157" description="Probable dipeptidyl-aminopeptidase B">
    <location>
        <begin position="1"/>
        <end position="899"/>
    </location>
</feature>
<feature type="topological domain" description="Cytoplasmic" evidence="2">
    <location>
        <begin position="1"/>
        <end position="91"/>
    </location>
</feature>
<feature type="transmembrane region" description="Helical; Signal-anchor for type II membrane protein" evidence="2">
    <location>
        <begin position="92"/>
        <end position="112"/>
    </location>
</feature>
<feature type="topological domain" description="Vacuolar" evidence="2">
    <location>
        <begin position="113"/>
        <end position="899"/>
    </location>
</feature>
<feature type="region of interest" description="Disordered" evidence="3">
    <location>
        <begin position="1"/>
        <end position="37"/>
    </location>
</feature>
<feature type="region of interest" description="Disordered" evidence="3">
    <location>
        <begin position="51"/>
        <end position="84"/>
    </location>
</feature>
<feature type="compositionally biased region" description="Low complexity" evidence="3">
    <location>
        <begin position="22"/>
        <end position="37"/>
    </location>
</feature>
<feature type="compositionally biased region" description="Basic and acidic residues" evidence="3">
    <location>
        <begin position="61"/>
        <end position="74"/>
    </location>
</feature>
<feature type="active site" description="Charge relay system" evidence="1">
    <location>
        <position position="752"/>
    </location>
</feature>
<feature type="active site" description="Charge relay system" evidence="1">
    <location>
        <position position="829"/>
    </location>
</feature>
<feature type="active site" description="Charge relay system" evidence="1">
    <location>
        <position position="862"/>
    </location>
</feature>
<feature type="glycosylation site" description="N-linked (GlcNAc...) asparagine" evidence="2">
    <location>
        <position position="149"/>
    </location>
</feature>
<feature type="glycosylation site" description="N-linked (GlcNAc...) asparagine" evidence="2">
    <location>
        <position position="194"/>
    </location>
</feature>
<feature type="glycosylation site" description="N-linked (GlcNAc...) asparagine" evidence="2">
    <location>
        <position position="347"/>
    </location>
</feature>
<feature type="glycosylation site" description="N-linked (GlcNAc...) asparagine" evidence="2">
    <location>
        <position position="409"/>
    </location>
</feature>
<feature type="glycosylation site" description="N-linked (GlcNAc...) asparagine" evidence="2">
    <location>
        <position position="513"/>
    </location>
</feature>
<feature type="glycosylation site" description="N-linked (GlcNAc...) asparagine" evidence="2">
    <location>
        <position position="638"/>
    </location>
</feature>
<feature type="glycosylation site" description="N-linked (GlcNAc...) asparagine" evidence="2">
    <location>
        <position position="643"/>
    </location>
</feature>
<feature type="glycosylation site" description="N-linked (GlcNAc...) asparagine" evidence="2">
    <location>
        <position position="811"/>
    </location>
</feature>